<name>RS2_YEAST</name>
<proteinExistence type="evidence at protein level"/>
<keyword id="KW-0002">3D-structure</keyword>
<keyword id="KW-0007">Acetylation</keyword>
<keyword id="KW-0963">Cytoplasm</keyword>
<keyword id="KW-0903">Direct protein sequencing</keyword>
<keyword id="KW-1017">Isopeptide bond</keyword>
<keyword id="KW-0488">Methylation</keyword>
<keyword id="KW-0539">Nucleus</keyword>
<keyword id="KW-1185">Reference proteome</keyword>
<keyword id="KW-0687">Ribonucleoprotein</keyword>
<keyword id="KW-0689">Ribosomal protein</keyword>
<keyword id="KW-0690">Ribosome biogenesis</keyword>
<keyword id="KW-0698">rRNA processing</keyword>
<keyword id="KW-0832">Ubl conjugation</keyword>
<comment type="function">
    <text evidence="5 13">Component of the ribosome, a large ribonucleoprotein complex responsible for the synthesis of proteins in the cell. The small ribosomal subunit (SSU) binds messenger RNAs (mRNAs) and translates the encoded message by selecting cognate aminoacyl-transfer RNA (tRNA) molecules. The large subunit (LSU) contains the ribosomal catalytic site termed the peptidyl transferase center (PTC), which catalyzes the formation of peptide bonds, thereby polymerizing the amino acids delivered by tRNAs into a polypeptide chain. The nascent polypeptides leave the ribosome through a tunnel in the LSU and interact with protein factors that function in enzymatic processing, targeting, and the membrane insertion of nascent chains at the exit of the ribosomal tunnel (PubMed:22096102). uS5 is important for the assembly and function of the 40S ribosomal subunit. Mutations in this protein affects the control of translational fidelity. Involved in nucleolar processing of pre-18S ribosomal RNA and ribosome assembly (PubMed:15590835).</text>
</comment>
<comment type="subunit">
    <text evidence="5 7 14">Component of the small ribosomal subunit (SSU). Mature yeast ribosomes consist of a small (40S) and a large (60S) subunit. The 40S small subunit contains 1 molecule of ribosomal RNA (18S rRNA) and 33 different proteins (encoded by 57 genes). The large 60S subunit contains 3 rRNA molecules (25S, 5.8S and 5S rRNA) and 46 different proteins (encoded by 81 genes) (PubMed:22096102, PubMed:9559554). Interacts with snoRNA U3. Interacts with MPP10. Component of the ribosomal small subunit (SSU) processome composed of at least 40 protein subunits and snoRNA U3 (PubMed:15590835).</text>
</comment>
<comment type="subcellular location">
    <subcellularLocation>
        <location evidence="7">Cytoplasm</location>
    </subcellularLocation>
    <subcellularLocation>
        <location evidence="5">Nucleus</location>
        <location evidence="5">Nucleolus</location>
    </subcellularLocation>
</comment>
<comment type="PTM">
    <text evidence="3 4">N-terminally acetylated by acetyltransferase NatA.</text>
</comment>
<comment type="similarity">
    <text evidence="12">Belongs to the universal ribosomal protein uS5 family.</text>
</comment>
<protein>
    <recommendedName>
        <fullName evidence="10">Small ribosomal subunit protein uS5</fullName>
    </recommendedName>
    <alternativeName>
        <fullName evidence="11">40S ribosomal protein S2</fullName>
    </alternativeName>
    <alternativeName>
        <fullName>Omnipotent suppressor protein SUP44</fullName>
    </alternativeName>
    <alternativeName>
        <fullName>RP12</fullName>
    </alternativeName>
    <alternativeName>
        <fullName>S4</fullName>
    </alternativeName>
    <alternativeName>
        <fullName>YS5</fullName>
    </alternativeName>
</protein>
<feature type="initiator methionine" description="Removed" evidence="3 4 16">
    <location>
        <position position="1"/>
    </location>
</feature>
<feature type="chain" id="PRO_0000131684" description="Small ribosomal subunit protein uS5">
    <location>
        <begin position="2"/>
        <end position="254"/>
    </location>
</feature>
<feature type="domain" description="S5 DRBM" evidence="1">
    <location>
        <begin position="76"/>
        <end position="139"/>
    </location>
</feature>
<feature type="region of interest" description="Disordered" evidence="2">
    <location>
        <begin position="1"/>
        <end position="34"/>
    </location>
</feature>
<feature type="compositionally biased region" description="Polar residues" evidence="2">
    <location>
        <begin position="1"/>
        <end position="10"/>
    </location>
</feature>
<feature type="compositionally biased region" description="Basic residues" evidence="2">
    <location>
        <begin position="18"/>
        <end position="27"/>
    </location>
</feature>
<feature type="modified residue" description="N-acetylserine" evidence="3 4 16">
    <location>
        <position position="2"/>
    </location>
</feature>
<feature type="modified residue" description="Asymmetric dimethylarginine; by HMT1; alternate" evidence="6 8 9">
    <location>
        <position position="11"/>
    </location>
</feature>
<feature type="modified residue" description="Omega-N-methylarginine; by HMT1; alternate" evidence="6 8 9">
    <location>
        <position position="11"/>
    </location>
</feature>
<feature type="modified residue" description="Omega-N-methylarginine; by HMT1" evidence="9">
    <location>
        <position position="17"/>
    </location>
</feature>
<feature type="cross-link" description="Glycyl lysine isopeptide (Lys-Gly) (interchain with G-Cter in ubiquitin)" evidence="15">
    <location>
        <position position="33"/>
    </location>
</feature>
<feature type="helix" evidence="18">
    <location>
        <begin position="40"/>
        <end position="46"/>
    </location>
</feature>
<feature type="helix" evidence="18">
    <location>
        <begin position="53"/>
        <end position="58"/>
    </location>
</feature>
<feature type="helix" evidence="18">
    <location>
        <begin position="66"/>
        <end position="72"/>
    </location>
</feature>
<feature type="strand" evidence="18">
    <location>
        <begin position="77"/>
        <end position="86"/>
    </location>
</feature>
<feature type="strand" evidence="18">
    <location>
        <begin position="97"/>
        <end position="106"/>
    </location>
</feature>
<feature type="turn" evidence="18">
    <location>
        <begin position="107"/>
        <end position="109"/>
    </location>
</feature>
<feature type="strand" evidence="18">
    <location>
        <begin position="110"/>
        <end position="120"/>
    </location>
</feature>
<feature type="helix" evidence="18">
    <location>
        <begin position="121"/>
        <end position="134"/>
    </location>
</feature>
<feature type="strand" evidence="17">
    <location>
        <begin position="136"/>
        <end position="138"/>
    </location>
</feature>
<feature type="strand" evidence="18">
    <location>
        <begin position="144"/>
        <end position="146"/>
    </location>
</feature>
<feature type="strand" evidence="18">
    <location>
        <begin position="153"/>
        <end position="156"/>
    </location>
</feature>
<feature type="strand" evidence="18">
    <location>
        <begin position="158"/>
        <end position="162"/>
    </location>
</feature>
<feature type="strand" evidence="18">
    <location>
        <begin position="165"/>
        <end position="171"/>
    </location>
</feature>
<feature type="strand" evidence="18">
    <location>
        <begin position="178"/>
        <end position="180"/>
    </location>
</feature>
<feature type="helix" evidence="18">
    <location>
        <begin position="182"/>
        <end position="191"/>
    </location>
</feature>
<feature type="strand" evidence="18">
    <location>
        <begin position="196"/>
        <end position="202"/>
    </location>
</feature>
<feature type="helix" evidence="18">
    <location>
        <begin position="207"/>
        <end position="219"/>
    </location>
</feature>
<feature type="helix" evidence="18">
    <location>
        <begin position="220"/>
        <end position="222"/>
    </location>
</feature>
<feature type="helix" evidence="18">
    <location>
        <begin position="227"/>
        <end position="229"/>
    </location>
</feature>
<feature type="helix" evidence="18">
    <location>
        <begin position="239"/>
        <end position="242"/>
    </location>
</feature>
<feature type="helix" evidence="18">
    <location>
        <begin position="244"/>
        <end position="247"/>
    </location>
</feature>
<evidence type="ECO:0000255" key="1">
    <source>
        <dbReference type="PROSITE-ProRule" id="PRU00268"/>
    </source>
</evidence>
<evidence type="ECO:0000256" key="2">
    <source>
        <dbReference type="SAM" id="MobiDB-lite"/>
    </source>
</evidence>
<evidence type="ECO:0000269" key="3">
    <source>
    </source>
</evidence>
<evidence type="ECO:0000269" key="4">
    <source>
    </source>
</evidence>
<evidence type="ECO:0000269" key="5">
    <source>
    </source>
</evidence>
<evidence type="ECO:0000269" key="6">
    <source>
    </source>
</evidence>
<evidence type="ECO:0000269" key="7">
    <source>
    </source>
</evidence>
<evidence type="ECO:0000269" key="8">
    <source>
    </source>
</evidence>
<evidence type="ECO:0000269" key="9">
    <source>
    </source>
</evidence>
<evidence type="ECO:0000303" key="10">
    <source>
    </source>
</evidence>
<evidence type="ECO:0000303" key="11">
    <source>
    </source>
</evidence>
<evidence type="ECO:0000305" key="12"/>
<evidence type="ECO:0000305" key="13">
    <source>
    </source>
</evidence>
<evidence type="ECO:0000305" key="14">
    <source>
    </source>
</evidence>
<evidence type="ECO:0007744" key="15">
    <source>
    </source>
</evidence>
<evidence type="ECO:0007744" key="16">
    <source>
    </source>
</evidence>
<evidence type="ECO:0007829" key="17">
    <source>
        <dbReference type="PDB" id="6RBD"/>
    </source>
</evidence>
<evidence type="ECO:0007829" key="18">
    <source>
        <dbReference type="PDB" id="8C01"/>
    </source>
</evidence>
<organism>
    <name type="scientific">Saccharomyces cerevisiae (strain ATCC 204508 / S288c)</name>
    <name type="common">Baker's yeast</name>
    <dbReference type="NCBI Taxonomy" id="559292"/>
    <lineage>
        <taxon>Eukaryota</taxon>
        <taxon>Fungi</taxon>
        <taxon>Dikarya</taxon>
        <taxon>Ascomycota</taxon>
        <taxon>Saccharomycotina</taxon>
        <taxon>Saccharomycetes</taxon>
        <taxon>Saccharomycetales</taxon>
        <taxon>Saccharomycetaceae</taxon>
        <taxon>Saccharomyces</taxon>
    </lineage>
</organism>
<reference key="1">
    <citation type="journal article" date="1990" name="Mol. Cell. Biol.">
        <title>Sequence and functional similarity between a yeast ribosomal protein and the Escherichia coli S5 ram protein.</title>
        <authorList>
            <person name="All-Robyn J.A."/>
            <person name="Brown N."/>
            <person name="Otaka E."/>
            <person name="Liebman S.W."/>
        </authorList>
    </citation>
    <scope>NUCLEOTIDE SEQUENCE [GENOMIC DNA]</scope>
</reference>
<reference key="2">
    <citation type="journal article" date="1996" name="Yeast">
        <title>Identification of a putative methylenetetrahydrofolate reductase by sequence analysis of a 6.8 kb DNA fragment of yeast chromosome VII.</title>
        <authorList>
            <person name="Tizon B."/>
            <person name="Rodriguez-Torres A.M."/>
            <person name="Rodriguez-Belmonte E."/>
            <person name="Cadahia J.L."/>
            <person name="Cerdan E."/>
        </authorList>
    </citation>
    <scope>NUCLEOTIDE SEQUENCE [GENOMIC DNA]</scope>
</reference>
<reference key="3">
    <citation type="journal article" date="1997" name="Nature">
        <title>The nucleotide sequence of Saccharomyces cerevisiae chromosome VII.</title>
        <authorList>
            <person name="Tettelin H."/>
            <person name="Agostoni-Carbone M.L."/>
            <person name="Albermann K."/>
            <person name="Albers M."/>
            <person name="Arroyo J."/>
            <person name="Backes U."/>
            <person name="Barreiros T."/>
            <person name="Bertani I."/>
            <person name="Bjourson A.J."/>
            <person name="Brueckner M."/>
            <person name="Bruschi C.V."/>
            <person name="Carignani G."/>
            <person name="Castagnoli L."/>
            <person name="Cerdan E."/>
            <person name="Clemente M.L."/>
            <person name="Coblenz A."/>
            <person name="Coglievina M."/>
            <person name="Coissac E."/>
            <person name="Defoor E."/>
            <person name="Del Bino S."/>
            <person name="Delius H."/>
            <person name="Delneri D."/>
            <person name="de Wergifosse P."/>
            <person name="Dujon B."/>
            <person name="Durand P."/>
            <person name="Entian K.-D."/>
            <person name="Eraso P."/>
            <person name="Escribano V."/>
            <person name="Fabiani L."/>
            <person name="Fartmann B."/>
            <person name="Feroli F."/>
            <person name="Feuermann M."/>
            <person name="Frontali L."/>
            <person name="Garcia-Gonzalez M."/>
            <person name="Garcia-Saez M.I."/>
            <person name="Goffeau A."/>
            <person name="Guerreiro P."/>
            <person name="Hani J."/>
            <person name="Hansen M."/>
            <person name="Hebling U."/>
            <person name="Hernandez K."/>
            <person name="Heumann K."/>
            <person name="Hilger F."/>
            <person name="Hofmann B."/>
            <person name="Indge K.J."/>
            <person name="James C.M."/>
            <person name="Klima R."/>
            <person name="Koetter P."/>
            <person name="Kramer B."/>
            <person name="Kramer W."/>
            <person name="Lauquin G."/>
            <person name="Leuther H."/>
            <person name="Louis E.J."/>
            <person name="Maillier E."/>
            <person name="Marconi A."/>
            <person name="Martegani E."/>
            <person name="Mazon M.J."/>
            <person name="Mazzoni C."/>
            <person name="McReynolds A.D.K."/>
            <person name="Melchioretto P."/>
            <person name="Mewes H.-W."/>
            <person name="Minenkova O."/>
            <person name="Mueller-Auer S."/>
            <person name="Nawrocki A."/>
            <person name="Netter P."/>
            <person name="Neu R."/>
            <person name="Nombela C."/>
            <person name="Oliver S.G."/>
            <person name="Panzeri L."/>
            <person name="Paoluzi S."/>
            <person name="Plevani P."/>
            <person name="Portetelle D."/>
            <person name="Portillo F."/>
            <person name="Potier S."/>
            <person name="Purnelle B."/>
            <person name="Rieger M."/>
            <person name="Riles L."/>
            <person name="Rinaldi T."/>
            <person name="Robben J."/>
            <person name="Rodrigues-Pousada C."/>
            <person name="Rodriguez-Belmonte E."/>
            <person name="Rodriguez-Torres A.M."/>
            <person name="Rose M."/>
            <person name="Ruzzi M."/>
            <person name="Saliola M."/>
            <person name="Sanchez-Perez M."/>
            <person name="Schaefer B."/>
            <person name="Schaefer M."/>
            <person name="Scharfe M."/>
            <person name="Schmidheini T."/>
            <person name="Schreer A."/>
            <person name="Skala J."/>
            <person name="Souciet J.-L."/>
            <person name="Steensma H.Y."/>
            <person name="Talla E."/>
            <person name="Thierry A."/>
            <person name="Vandenbol M."/>
            <person name="van der Aart Q.J.M."/>
            <person name="Van Dyck L."/>
            <person name="Vanoni M."/>
            <person name="Verhasselt P."/>
            <person name="Voet M."/>
            <person name="Volckaert G."/>
            <person name="Wambutt R."/>
            <person name="Watson M.D."/>
            <person name="Weber N."/>
            <person name="Wedler E."/>
            <person name="Wedler H."/>
            <person name="Wipfli P."/>
            <person name="Wolf K."/>
            <person name="Wright L.F."/>
            <person name="Zaccaria P."/>
            <person name="Zimmermann M."/>
            <person name="Zollner A."/>
            <person name="Kleine K."/>
        </authorList>
    </citation>
    <scope>NUCLEOTIDE SEQUENCE [LARGE SCALE GENOMIC DNA]</scope>
    <source>
        <strain>ATCC 204508 / S288c</strain>
    </source>
</reference>
<reference key="4">
    <citation type="journal article" date="2014" name="G3 (Bethesda)">
        <title>The reference genome sequence of Saccharomyces cerevisiae: Then and now.</title>
        <authorList>
            <person name="Engel S.R."/>
            <person name="Dietrich F.S."/>
            <person name="Fisk D.G."/>
            <person name="Binkley G."/>
            <person name="Balakrishnan R."/>
            <person name="Costanzo M.C."/>
            <person name="Dwight S.S."/>
            <person name="Hitz B.C."/>
            <person name="Karra K."/>
            <person name="Nash R.S."/>
            <person name="Weng S."/>
            <person name="Wong E.D."/>
            <person name="Lloyd P."/>
            <person name="Skrzypek M.S."/>
            <person name="Miyasato S.R."/>
            <person name="Simison M."/>
            <person name="Cherry J.M."/>
        </authorList>
    </citation>
    <scope>GENOME REANNOTATION</scope>
    <source>
        <strain>ATCC 204508 / S288c</strain>
    </source>
</reference>
<reference key="5">
    <citation type="journal article" date="2007" name="Genome Res.">
        <title>Approaching a complete repository of sequence-verified protein-encoding clones for Saccharomyces cerevisiae.</title>
        <authorList>
            <person name="Hu Y."/>
            <person name="Rolfs A."/>
            <person name="Bhullar B."/>
            <person name="Murthy T.V.S."/>
            <person name="Zhu C."/>
            <person name="Berger M.F."/>
            <person name="Camargo A.A."/>
            <person name="Kelley F."/>
            <person name="McCarron S."/>
            <person name="Jepson D."/>
            <person name="Richardson A."/>
            <person name="Raphael J."/>
            <person name="Moreira D."/>
            <person name="Taycher E."/>
            <person name="Zuo D."/>
            <person name="Mohr S."/>
            <person name="Kane M.F."/>
            <person name="Williamson J."/>
            <person name="Simpson A.J.G."/>
            <person name="Bulyk M.L."/>
            <person name="Harlow E."/>
            <person name="Marsischky G."/>
            <person name="Kolodner R.D."/>
            <person name="LaBaer J."/>
        </authorList>
    </citation>
    <scope>NUCLEOTIDE SEQUENCE [GENOMIC DNA]</scope>
    <source>
        <strain>ATCC 204508 / S288c</strain>
    </source>
</reference>
<reference key="6">
    <citation type="journal article" date="1992" name="J. Biol. Chem.">
        <title>NH2-terminal acetylation of ribosomal proteins of Saccharomyces cerevisiae.</title>
        <authorList>
            <person name="Takakura H."/>
            <person name="Tsunasawa S."/>
            <person name="Miyagi M."/>
            <person name="Warner J.R."/>
        </authorList>
    </citation>
    <scope>PROTEIN SEQUENCE OF 2-11</scope>
    <scope>ACETYLATION AT SER-2</scope>
</reference>
<reference key="7">
    <citation type="journal article" date="1998" name="Yeast">
        <title>The list of cytoplasmic ribosomal proteins of Saccharomyces cerevisiae.</title>
        <authorList>
            <person name="Planta R.J."/>
            <person name="Mager W.H."/>
        </authorList>
    </citation>
    <scope>NOMENCLATURE</scope>
    <scope>SUBUNIT</scope>
</reference>
<reference key="8">
    <citation type="journal article" date="1999" name="J. Biol. Chem.">
        <title>The action of N-terminal acetyltransferases on yeast ribosomal proteins.</title>
        <authorList>
            <person name="Arnold R.J."/>
            <person name="Polevoda B."/>
            <person name="Reilly J.P."/>
            <person name="Sherman F."/>
        </authorList>
    </citation>
    <scope>CLEAVAGE OF INITIATOR METHIONINE</scope>
    <scope>ACETYLATION AT SER-2 BY NATA</scope>
</reference>
<reference key="9">
    <citation type="journal article" date="2004" name="Eukaryot. Cell">
        <title>The small-subunit processome is a ribosome assembly intermediate.</title>
        <authorList>
            <person name="Bernstein K.A."/>
            <person name="Gallagher J.E.G."/>
            <person name="Mitchell B.M."/>
            <person name="Granneman S."/>
            <person name="Baserga S.J."/>
        </authorList>
    </citation>
    <scope>FUNCTION</scope>
    <scope>INTERACTION WITH MPP10 AND SNORNA U3</scope>
    <scope>IDENTIFICATION IN SSU PROCESSOME</scope>
    <scope>SUBCELLULAR LOCATION</scope>
</reference>
<reference key="10">
    <citation type="journal article" date="2008" name="Mol. Cell. Proteomics">
        <title>A multidimensional chromatography technology for in-depth phosphoproteome analysis.</title>
        <authorList>
            <person name="Albuquerque C.P."/>
            <person name="Smolka M.B."/>
            <person name="Payne S.H."/>
            <person name="Bafna V."/>
            <person name="Eng J."/>
            <person name="Zhou H."/>
        </authorList>
    </citation>
    <scope>IDENTIFICATION BY MASS SPECTROMETRY [LARGE SCALE ANALYSIS]</scope>
</reference>
<reference key="11">
    <citation type="journal article" date="2010" name="Biochem. Biophys. Res. Commun.">
        <title>Rmt1 catalyzes zinc-finger independent arginine methylation of ribosomal protein Rps2 in Saccharomyces cerevisiae.</title>
        <authorList>
            <person name="Lipson R.S."/>
            <person name="Webb K.J."/>
            <person name="Clarke S.G."/>
        </authorList>
    </citation>
    <scope>METHYLATION BY HMT1</scope>
</reference>
<reference key="12">
    <citation type="journal article" date="2012" name="Biochemistry">
        <title>Identification of methylated proteins in the yeast small ribosomal subunit: a role for SPOUT methyltransferases in protein arginine methylation.</title>
        <authorList>
            <person name="Young B.D."/>
            <person name="Weiss D.I."/>
            <person name="Zurita-Lopez C.I."/>
            <person name="Webb K.J."/>
            <person name="Clarke S.G."/>
            <person name="McBride A.E."/>
        </authorList>
    </citation>
    <scope>METHYLATION AT ARG-11</scope>
</reference>
<reference key="13">
    <citation type="journal article" date="2012" name="Proc. Natl. Acad. Sci. U.S.A.">
        <title>N-terminal acetylome analyses and functional insights of the N-terminal acetyltransferase NatB.</title>
        <authorList>
            <person name="Van Damme P."/>
            <person name="Lasa M."/>
            <person name="Polevoda B."/>
            <person name="Gazquez C."/>
            <person name="Elosegui-Artola A."/>
            <person name="Kim D.S."/>
            <person name="De Juan-Pardo E."/>
            <person name="Demeyer K."/>
            <person name="Hole K."/>
            <person name="Larrea E."/>
            <person name="Timmerman E."/>
            <person name="Prieto J."/>
            <person name="Arnesen T."/>
            <person name="Sherman F."/>
            <person name="Gevaert K."/>
            <person name="Aldabe R."/>
        </authorList>
    </citation>
    <scope>ACETYLATION [LARGE SCALE ANALYSIS] AT SER-2</scope>
    <scope>CLEAVAGE OF INITIATOR METHIONINE [LARGE SCALE ANALYSIS]</scope>
    <scope>IDENTIFICATION BY MASS SPECTROMETRY [LARGE SCALE ANALYSIS]</scope>
</reference>
<reference key="14">
    <citation type="journal article" date="2012" name="Proteomics">
        <title>Sites of ubiquitin attachment in Saccharomyces cerevisiae.</title>
        <authorList>
            <person name="Starita L.M."/>
            <person name="Lo R.S."/>
            <person name="Eng J.K."/>
            <person name="von Haller P.D."/>
            <person name="Fields S."/>
        </authorList>
    </citation>
    <scope>UBIQUITINATION [LARGE SCALE ANALYSIS] AT LYS-33</scope>
    <scope>IDENTIFICATION BY MASS SPECTROMETRY [LARGE SCALE ANALYSIS]</scope>
</reference>
<reference key="15">
    <citation type="journal article" date="2014" name="Curr. Opin. Struct. Biol.">
        <title>A new system for naming ribosomal proteins.</title>
        <authorList>
            <person name="Ban N."/>
            <person name="Beckmann R."/>
            <person name="Cate J.H.D."/>
            <person name="Dinman J.D."/>
            <person name="Dragon F."/>
            <person name="Ellis S.R."/>
            <person name="Lafontaine D.L.J."/>
            <person name="Lindahl L."/>
            <person name="Liljas A."/>
            <person name="Lipton J.M."/>
            <person name="McAlear M.A."/>
            <person name="Moore P.B."/>
            <person name="Noller H.F."/>
            <person name="Ortega J."/>
            <person name="Panse V.G."/>
            <person name="Ramakrishnan V."/>
            <person name="Spahn C.M.T."/>
            <person name="Steitz T.A."/>
            <person name="Tchorzewski M."/>
            <person name="Tollervey D."/>
            <person name="Warren A.J."/>
            <person name="Williamson J.R."/>
            <person name="Wilson D."/>
            <person name="Yonath A."/>
            <person name="Yusupov M."/>
        </authorList>
    </citation>
    <scope>NOMENCLATURE</scope>
</reference>
<reference key="16">
    <citation type="journal article" date="2015" name="Proteomics">
        <title>Yeast proteins Gar1p, Nop1p, Npl3p, Nsr1p, and Rps2p are natively methylated and are substrates of the arginine methyltransferase Hmt1p.</title>
        <authorList>
            <person name="Yagoub D."/>
            <person name="Hart-Smith G."/>
            <person name="Moecking J."/>
            <person name="Erce M.A."/>
            <person name="Wilkins M.R."/>
        </authorList>
    </citation>
    <scope>METHYLATION AT ARG-11 AND ARG-17</scope>
</reference>
<reference key="17">
    <citation type="journal article" date="2001" name="Cell">
        <title>Structure of the 80S ribosome from Saccharomyces cerevisiae -- tRNA-ribosome and subunit-subunit interactions.</title>
        <authorList>
            <person name="Spahn C.M.T."/>
            <person name="Beckmann R."/>
            <person name="Eswar N."/>
            <person name="Penczek P.A."/>
            <person name="Sali A."/>
            <person name="Blobel G."/>
            <person name="Frank J."/>
        </authorList>
    </citation>
    <scope>3D-STRUCTURE MODELING OF 75-223</scope>
</reference>
<reference key="18">
    <citation type="journal article" date="2004" name="EMBO J.">
        <title>Domain movements of elongation factor eEF2 and the eukaryotic 80S ribosome facilitate tRNA translocation.</title>
        <authorList>
            <person name="Spahn C.M.T."/>
            <person name="Gomez-Lorenzo M.G."/>
            <person name="Grassucci R.A."/>
            <person name="Joergensen R."/>
            <person name="Andersen G.R."/>
            <person name="Beckmann R."/>
            <person name="Penczek P.A."/>
            <person name="Ballesta J.P.G."/>
            <person name="Frank J."/>
        </authorList>
    </citation>
    <scope>3D-STRUCTURE MODELING OF 75-223</scope>
    <scope>ELECTRON MICROSCOPY</scope>
</reference>
<reference key="19">
    <citation type="journal article" date="2010" name="Proc. Natl. Acad. Sci. U.S.A.">
        <title>Cryo-EM structure and rRNA model of a translating eukaryotic 80S ribosome at 5.5-A resolution.</title>
        <authorList>
            <person name="Armache J.P."/>
            <person name="Jarasch A."/>
            <person name="Anger A.M."/>
            <person name="Villa E."/>
            <person name="Becker T."/>
            <person name="Bhushan S."/>
            <person name="Jossinet F."/>
            <person name="Habeck M."/>
            <person name="Dindar G."/>
            <person name="Franckenberg S."/>
            <person name="Marquez V."/>
            <person name="Mielke T."/>
            <person name="Thomm M."/>
            <person name="Berninghausen O."/>
            <person name="Beatrix B."/>
            <person name="Soding J."/>
            <person name="Westhof E."/>
            <person name="Wilson D.N."/>
            <person name="Beckmann R."/>
        </authorList>
    </citation>
    <scope>STRUCTURE BY ELECTRON MICROSCOPY</scope>
</reference>
<reference key="20">
    <citation type="journal article" date="2010" name="Science">
        <title>Crystal structure of the eukaryotic ribosome.</title>
        <authorList>
            <person name="Ben-Shem A."/>
            <person name="Jenner L."/>
            <person name="Yusupova G."/>
            <person name="Yusupov M."/>
        </authorList>
    </citation>
    <scope>X-RAY CRYSTALLOGRAPHY (4.00 ANGSTROMS) OF 80S RIBOSOME</scope>
</reference>
<reference key="21">
    <citation type="journal article" date="2011" name="Science">
        <title>The structure of the eukaryotic ribosome at 3.0 A resolution.</title>
        <authorList>
            <person name="Ben-Shem A."/>
            <person name="Garreau de Loubresse N."/>
            <person name="Melnikov S."/>
            <person name="Jenner L."/>
            <person name="Yusupova G."/>
            <person name="Yusupov M."/>
        </authorList>
    </citation>
    <scope>X-RAY CRYSTALLOGRAPHY (3.00 ANGSTROMS) OF 80S RIBOSOME</scope>
    <scope>SUBUNIT</scope>
    <scope>SUBCELLULAR LOCATION</scope>
</reference>
<reference key="22">
    <citation type="journal article" date="2013" name="Science">
        <title>Molecular architecture of a eukaryotic translational initiation complex.</title>
        <authorList>
            <person name="Fernandez I.S."/>
            <person name="Bai X.C."/>
            <person name="Hussain T."/>
            <person name="Kelley A.C."/>
            <person name="Lorsch J.R."/>
            <person name="Ramakrishnan V."/>
            <person name="Scheres S.H."/>
        </authorList>
    </citation>
    <scope>STRUCTURE BY ELECTRON MICROSCOPY (4.30 ANGSTROMS) OF 1-254</scope>
</reference>
<gene>
    <name evidence="11" type="primary">RPS2</name>
    <name type="synonym">RPS4</name>
    <name type="synonym">SUP38</name>
    <name type="synonym">SUP44</name>
    <name type="ordered locus">YGL123W</name>
    <name type="ORF">G2893</name>
</gene>
<accession>P25443</accession>
<accession>D6VU25</accession>
<dbReference type="EMBL" id="M59375">
    <property type="protein sequence ID" value="AAA63576.1"/>
    <property type="molecule type" value="Genomic_DNA"/>
</dbReference>
<dbReference type="EMBL" id="X94106">
    <property type="protein sequence ID" value="CAA63835.1"/>
    <property type="molecule type" value="Genomic_DNA"/>
</dbReference>
<dbReference type="EMBL" id="Z72645">
    <property type="protein sequence ID" value="CAA96831.1"/>
    <property type="molecule type" value="Genomic_DNA"/>
</dbReference>
<dbReference type="EMBL" id="AY557815">
    <property type="protein sequence ID" value="AAS56141.1"/>
    <property type="molecule type" value="Genomic_DNA"/>
</dbReference>
<dbReference type="EMBL" id="BK006941">
    <property type="protein sequence ID" value="DAA07986.1"/>
    <property type="molecule type" value="Genomic_DNA"/>
</dbReference>
<dbReference type="PIR" id="A36363">
    <property type="entry name" value="R3BYS2"/>
</dbReference>
<dbReference type="RefSeq" id="NP_011392.1">
    <property type="nucleotide sequence ID" value="NM_001180988.1"/>
</dbReference>
<dbReference type="PDB" id="3J6X">
    <property type="method" value="EM"/>
    <property type="resolution" value="6.10 A"/>
    <property type="chains" value="S2=1-254"/>
</dbReference>
<dbReference type="PDB" id="3J6Y">
    <property type="method" value="EM"/>
    <property type="resolution" value="6.10 A"/>
    <property type="chains" value="S2=1-254"/>
</dbReference>
<dbReference type="PDB" id="3J77">
    <property type="method" value="EM"/>
    <property type="resolution" value="6.20 A"/>
    <property type="chains" value="S2=1-254"/>
</dbReference>
<dbReference type="PDB" id="3J78">
    <property type="method" value="EM"/>
    <property type="resolution" value="6.30 A"/>
    <property type="chains" value="S2=1-254"/>
</dbReference>
<dbReference type="PDB" id="4U3M">
    <property type="method" value="X-ray"/>
    <property type="resolution" value="3.00 A"/>
    <property type="chains" value="S2/s2=2-254"/>
</dbReference>
<dbReference type="PDB" id="4U3N">
    <property type="method" value="X-ray"/>
    <property type="resolution" value="3.20 A"/>
    <property type="chains" value="S2/s2=2-254"/>
</dbReference>
<dbReference type="PDB" id="4U3U">
    <property type="method" value="X-ray"/>
    <property type="resolution" value="2.90 A"/>
    <property type="chains" value="S2/s2=2-254"/>
</dbReference>
<dbReference type="PDB" id="4U4N">
    <property type="method" value="X-ray"/>
    <property type="resolution" value="3.10 A"/>
    <property type="chains" value="S2/s2=2-254"/>
</dbReference>
<dbReference type="PDB" id="4U4O">
    <property type="method" value="X-ray"/>
    <property type="resolution" value="3.60 A"/>
    <property type="chains" value="S2/s2=2-254"/>
</dbReference>
<dbReference type="PDB" id="4U4Q">
    <property type="method" value="X-ray"/>
    <property type="resolution" value="3.00 A"/>
    <property type="chains" value="S2/s2=2-254"/>
</dbReference>
<dbReference type="PDB" id="4U4R">
    <property type="method" value="X-ray"/>
    <property type="resolution" value="2.80 A"/>
    <property type="chains" value="S2/s2=2-254"/>
</dbReference>
<dbReference type="PDB" id="4U4U">
    <property type="method" value="X-ray"/>
    <property type="resolution" value="3.00 A"/>
    <property type="chains" value="S2/s2=2-254"/>
</dbReference>
<dbReference type="PDB" id="4U4Y">
    <property type="method" value="X-ray"/>
    <property type="resolution" value="3.20 A"/>
    <property type="chains" value="S2/s2=2-254"/>
</dbReference>
<dbReference type="PDB" id="4U4Z">
    <property type="method" value="X-ray"/>
    <property type="resolution" value="3.10 A"/>
    <property type="chains" value="S2/s2=2-254"/>
</dbReference>
<dbReference type="PDB" id="4U50">
    <property type="method" value="X-ray"/>
    <property type="resolution" value="3.20 A"/>
    <property type="chains" value="S2/s2=2-254"/>
</dbReference>
<dbReference type="PDB" id="4U51">
    <property type="method" value="X-ray"/>
    <property type="resolution" value="3.20 A"/>
    <property type="chains" value="S2/s2=2-254"/>
</dbReference>
<dbReference type="PDB" id="4U52">
    <property type="method" value="X-ray"/>
    <property type="resolution" value="3.00 A"/>
    <property type="chains" value="S2/s2=2-254"/>
</dbReference>
<dbReference type="PDB" id="4U53">
    <property type="method" value="X-ray"/>
    <property type="resolution" value="3.30 A"/>
    <property type="chains" value="S2/s2=2-254"/>
</dbReference>
<dbReference type="PDB" id="4U55">
    <property type="method" value="X-ray"/>
    <property type="resolution" value="3.20 A"/>
    <property type="chains" value="S2/s2=2-254"/>
</dbReference>
<dbReference type="PDB" id="4U56">
    <property type="method" value="X-ray"/>
    <property type="resolution" value="3.45 A"/>
    <property type="chains" value="S2/s2=2-254"/>
</dbReference>
<dbReference type="PDB" id="4U6F">
    <property type="method" value="X-ray"/>
    <property type="resolution" value="3.10 A"/>
    <property type="chains" value="S2/s2=2-254"/>
</dbReference>
<dbReference type="PDB" id="4V4B">
    <property type="method" value="EM"/>
    <property type="resolution" value="11.70 A"/>
    <property type="chains" value="AE=75-223"/>
</dbReference>
<dbReference type="PDB" id="4V5Z">
    <property type="method" value="EM"/>
    <property type="resolution" value="8.70 A"/>
    <property type="chains" value="Ae=68-245"/>
</dbReference>
<dbReference type="PDB" id="4V6I">
    <property type="method" value="EM"/>
    <property type="resolution" value="8.80 A"/>
    <property type="chains" value="AE=1-254"/>
</dbReference>
<dbReference type="PDB" id="4V7R">
    <property type="method" value="X-ray"/>
    <property type="resolution" value="4.00 A"/>
    <property type="chains" value="AB/CB=1-254"/>
</dbReference>
<dbReference type="PDB" id="4V88">
    <property type="method" value="X-ray"/>
    <property type="resolution" value="3.00 A"/>
    <property type="chains" value="AC/CC=1-254"/>
</dbReference>
<dbReference type="PDB" id="4V8Y">
    <property type="method" value="EM"/>
    <property type="resolution" value="4.30 A"/>
    <property type="chains" value="AC=1-254"/>
</dbReference>
<dbReference type="PDB" id="4V8Z">
    <property type="method" value="EM"/>
    <property type="resolution" value="6.60 A"/>
    <property type="chains" value="AC=1-254"/>
</dbReference>
<dbReference type="PDB" id="4V92">
    <property type="method" value="EM"/>
    <property type="resolution" value="3.70 A"/>
    <property type="chains" value="C=34-249"/>
</dbReference>
<dbReference type="PDB" id="5DAT">
    <property type="method" value="X-ray"/>
    <property type="resolution" value="3.15 A"/>
    <property type="chains" value="S2/s2=2-254"/>
</dbReference>
<dbReference type="PDB" id="5DC3">
    <property type="method" value="X-ray"/>
    <property type="resolution" value="3.25 A"/>
    <property type="chains" value="S2/s2=2-254"/>
</dbReference>
<dbReference type="PDB" id="5DGE">
    <property type="method" value="X-ray"/>
    <property type="resolution" value="3.45 A"/>
    <property type="chains" value="S2/s2=2-254"/>
</dbReference>
<dbReference type="PDB" id="5DGF">
    <property type="method" value="X-ray"/>
    <property type="resolution" value="3.30 A"/>
    <property type="chains" value="S2/s2=2-254"/>
</dbReference>
<dbReference type="PDB" id="5DGV">
    <property type="method" value="X-ray"/>
    <property type="resolution" value="3.10 A"/>
    <property type="chains" value="S2/s2=2-254"/>
</dbReference>
<dbReference type="PDB" id="5FCI">
    <property type="method" value="X-ray"/>
    <property type="resolution" value="3.40 A"/>
    <property type="chains" value="S2/s2=2-254"/>
</dbReference>
<dbReference type="PDB" id="5FCJ">
    <property type="method" value="X-ray"/>
    <property type="resolution" value="3.10 A"/>
    <property type="chains" value="S2/s2=2-254"/>
</dbReference>
<dbReference type="PDB" id="5I4L">
    <property type="method" value="X-ray"/>
    <property type="resolution" value="3.10 A"/>
    <property type="chains" value="S2/s2=34-250"/>
</dbReference>
<dbReference type="PDB" id="5JUO">
    <property type="method" value="EM"/>
    <property type="resolution" value="4.00 A"/>
    <property type="chains" value="ZA=1-254"/>
</dbReference>
<dbReference type="PDB" id="5JUP">
    <property type="method" value="EM"/>
    <property type="resolution" value="3.50 A"/>
    <property type="chains" value="ZA=1-254"/>
</dbReference>
<dbReference type="PDB" id="5JUS">
    <property type="method" value="EM"/>
    <property type="resolution" value="4.20 A"/>
    <property type="chains" value="ZA=1-254"/>
</dbReference>
<dbReference type="PDB" id="5JUT">
    <property type="method" value="EM"/>
    <property type="resolution" value="4.00 A"/>
    <property type="chains" value="ZA=1-254"/>
</dbReference>
<dbReference type="PDB" id="5JUU">
    <property type="method" value="EM"/>
    <property type="resolution" value="4.00 A"/>
    <property type="chains" value="ZA=1-254"/>
</dbReference>
<dbReference type="PDB" id="5LL6">
    <property type="method" value="EM"/>
    <property type="resolution" value="3.90 A"/>
    <property type="chains" value="R=1-254"/>
</dbReference>
<dbReference type="PDB" id="5LYB">
    <property type="method" value="X-ray"/>
    <property type="resolution" value="3.25 A"/>
    <property type="chains" value="S2/s2=34-250"/>
</dbReference>
<dbReference type="PDB" id="5M1J">
    <property type="method" value="EM"/>
    <property type="resolution" value="3.30 A"/>
    <property type="chains" value="C2=34-250"/>
</dbReference>
<dbReference type="PDB" id="5MC6">
    <property type="method" value="EM"/>
    <property type="resolution" value="3.80 A"/>
    <property type="chains" value="R=1-254"/>
</dbReference>
<dbReference type="PDB" id="5MEI">
    <property type="method" value="X-ray"/>
    <property type="resolution" value="3.50 A"/>
    <property type="chains" value="D/s2=34-250"/>
</dbReference>
<dbReference type="PDB" id="5NDG">
    <property type="method" value="X-ray"/>
    <property type="resolution" value="3.70 A"/>
    <property type="chains" value="S2/s2=34-250"/>
</dbReference>
<dbReference type="PDB" id="5NDV">
    <property type="method" value="X-ray"/>
    <property type="resolution" value="3.30 A"/>
    <property type="chains" value="S2/s2=34-250"/>
</dbReference>
<dbReference type="PDB" id="5NDW">
    <property type="method" value="X-ray"/>
    <property type="resolution" value="3.70 A"/>
    <property type="chains" value="S2/s2=34-250"/>
</dbReference>
<dbReference type="PDB" id="5OBM">
    <property type="method" value="X-ray"/>
    <property type="resolution" value="3.40 A"/>
    <property type="chains" value="S2/s2=34-250"/>
</dbReference>
<dbReference type="PDB" id="5ON6">
    <property type="method" value="X-ray"/>
    <property type="resolution" value="3.10 A"/>
    <property type="chains" value="D/s2=34-250"/>
</dbReference>
<dbReference type="PDB" id="5TBW">
    <property type="method" value="X-ray"/>
    <property type="resolution" value="3.00 A"/>
    <property type="chains" value="D/s2=34-250"/>
</dbReference>
<dbReference type="PDB" id="5TGA">
    <property type="method" value="X-ray"/>
    <property type="resolution" value="3.30 A"/>
    <property type="chains" value="S2/s2=34-250"/>
</dbReference>
<dbReference type="PDB" id="5TGM">
    <property type="method" value="X-ray"/>
    <property type="resolution" value="3.50 A"/>
    <property type="chains" value="S2/s2=34-250"/>
</dbReference>
<dbReference type="PDB" id="6EML">
    <property type="method" value="EM"/>
    <property type="resolution" value="3.60 A"/>
    <property type="chains" value="R=1-254"/>
</dbReference>
<dbReference type="PDB" id="6FAI">
    <property type="method" value="EM"/>
    <property type="resolution" value="3.40 A"/>
    <property type="chains" value="C=1-254"/>
</dbReference>
<dbReference type="PDB" id="6GQ1">
    <property type="method" value="EM"/>
    <property type="resolution" value="4.40 A"/>
    <property type="chains" value="s=34-250"/>
</dbReference>
<dbReference type="PDB" id="6GQB">
    <property type="method" value="EM"/>
    <property type="resolution" value="3.90 A"/>
    <property type="chains" value="s=34-250"/>
</dbReference>
<dbReference type="PDB" id="6GQV">
    <property type="method" value="EM"/>
    <property type="resolution" value="4.00 A"/>
    <property type="chains" value="s=34-250"/>
</dbReference>
<dbReference type="PDB" id="6HHQ">
    <property type="method" value="X-ray"/>
    <property type="resolution" value="3.10 A"/>
    <property type="chains" value="D/s2=1-254"/>
</dbReference>
<dbReference type="PDB" id="6I7O">
    <property type="method" value="EM"/>
    <property type="resolution" value="5.30 A"/>
    <property type="chains" value="R/Rb=34-250"/>
</dbReference>
<dbReference type="PDB" id="6Q8Y">
    <property type="method" value="EM"/>
    <property type="resolution" value="3.10 A"/>
    <property type="chains" value="R=35-254"/>
</dbReference>
<dbReference type="PDB" id="6RBD">
    <property type="method" value="EM"/>
    <property type="resolution" value="3.47 A"/>
    <property type="chains" value="C=1-254"/>
</dbReference>
<dbReference type="PDB" id="6RBE">
    <property type="method" value="EM"/>
    <property type="resolution" value="3.80 A"/>
    <property type="chains" value="C=1-254"/>
</dbReference>
<dbReference type="PDB" id="6S47">
    <property type="method" value="EM"/>
    <property type="resolution" value="3.28 A"/>
    <property type="chains" value="BD=2-254"/>
</dbReference>
<dbReference type="PDB" id="6SNT">
    <property type="method" value="EM"/>
    <property type="resolution" value="2.80 A"/>
    <property type="chains" value="C=1-254"/>
</dbReference>
<dbReference type="PDB" id="6SV4">
    <property type="method" value="EM"/>
    <property type="resolution" value="3.30 A"/>
    <property type="chains" value="R/Rb/Rc=1-254"/>
</dbReference>
<dbReference type="PDB" id="6T4Q">
    <property type="method" value="EM"/>
    <property type="resolution" value="2.60 A"/>
    <property type="chains" value="SC=34-249"/>
</dbReference>
<dbReference type="PDB" id="6T7I">
    <property type="method" value="EM"/>
    <property type="resolution" value="3.20 A"/>
    <property type="chains" value="SC=1-254"/>
</dbReference>
<dbReference type="PDB" id="6T7T">
    <property type="method" value="EM"/>
    <property type="resolution" value="3.10 A"/>
    <property type="chains" value="SC=1-254"/>
</dbReference>
<dbReference type="PDB" id="6T83">
    <property type="method" value="EM"/>
    <property type="resolution" value="4.00 A"/>
    <property type="chains" value="Cb/d=1-254"/>
</dbReference>
<dbReference type="PDB" id="6TB3">
    <property type="method" value="EM"/>
    <property type="resolution" value="2.80 A"/>
    <property type="chains" value="R=34-249"/>
</dbReference>
<dbReference type="PDB" id="6TNU">
    <property type="method" value="EM"/>
    <property type="resolution" value="3.10 A"/>
    <property type="chains" value="R=34-249"/>
</dbReference>
<dbReference type="PDB" id="6WDR">
    <property type="method" value="EM"/>
    <property type="resolution" value="3.70 A"/>
    <property type="chains" value="C=34-250"/>
</dbReference>
<dbReference type="PDB" id="6WOO">
    <property type="method" value="EM"/>
    <property type="resolution" value="2.90 A"/>
    <property type="chains" value="CC=34-250"/>
</dbReference>
<dbReference type="PDB" id="6Y7C">
    <property type="method" value="EM"/>
    <property type="resolution" value="3.80 A"/>
    <property type="chains" value="C=1-254"/>
</dbReference>
<dbReference type="PDB" id="6Z6J">
    <property type="method" value="EM"/>
    <property type="resolution" value="3.40 A"/>
    <property type="chains" value="SC=1-254"/>
</dbReference>
<dbReference type="PDB" id="6Z6K">
    <property type="method" value="EM"/>
    <property type="resolution" value="3.40 A"/>
    <property type="chains" value="SC=1-254"/>
</dbReference>
<dbReference type="PDB" id="6ZCE">
    <property type="method" value="EM"/>
    <property type="resolution" value="5.30 A"/>
    <property type="chains" value="D=1-254"/>
</dbReference>
<dbReference type="PDB" id="6ZU9">
    <property type="method" value="EM"/>
    <property type="resolution" value="6.20 A"/>
    <property type="chains" value="R=1-254"/>
</dbReference>
<dbReference type="PDB" id="6ZVI">
    <property type="method" value="EM"/>
    <property type="resolution" value="3.00 A"/>
    <property type="chains" value="k=34-250"/>
</dbReference>
<dbReference type="PDB" id="7A1G">
    <property type="method" value="EM"/>
    <property type="resolution" value="3.00 A"/>
    <property type="chains" value="R=34-249"/>
</dbReference>
<dbReference type="PDB" id="7B7D">
    <property type="method" value="EM"/>
    <property type="resolution" value="3.30 A"/>
    <property type="chains" value="R=34-249"/>
</dbReference>
<dbReference type="PDB" id="7MPI">
    <property type="method" value="EM"/>
    <property type="resolution" value="3.05 A"/>
    <property type="chains" value="BC=34-250"/>
</dbReference>
<dbReference type="PDB" id="7MPJ">
    <property type="method" value="EM"/>
    <property type="resolution" value="2.70 A"/>
    <property type="chains" value="BC=34-250"/>
</dbReference>
<dbReference type="PDB" id="7N8B">
    <property type="method" value="EM"/>
    <property type="resolution" value="3.05 A"/>
    <property type="chains" value="BC=34-250"/>
</dbReference>
<dbReference type="PDB" id="7NRC">
    <property type="method" value="EM"/>
    <property type="resolution" value="3.90 A"/>
    <property type="chains" value="SR=34-249"/>
</dbReference>
<dbReference type="PDB" id="7NRD">
    <property type="method" value="EM"/>
    <property type="resolution" value="4.36 A"/>
    <property type="chains" value="SR=34-250"/>
</dbReference>
<dbReference type="PDB" id="7WTN">
    <property type="method" value="EM"/>
    <property type="resolution" value="3.40 A"/>
    <property type="chains" value="SC=1-254"/>
</dbReference>
<dbReference type="PDB" id="7WTP">
    <property type="method" value="EM"/>
    <property type="resolution" value="3.80 A"/>
    <property type="chains" value="SC=1-254"/>
</dbReference>
<dbReference type="PDB" id="7WTR">
    <property type="method" value="EM"/>
    <property type="resolution" value="3.50 A"/>
    <property type="chains" value="SC=1-254"/>
</dbReference>
<dbReference type="PDB" id="7ZPQ">
    <property type="method" value="EM"/>
    <property type="resolution" value="3.47 A"/>
    <property type="chains" value="AC=34-249"/>
</dbReference>
<dbReference type="PDB" id="7ZRS">
    <property type="method" value="EM"/>
    <property type="resolution" value="4.80 A"/>
    <property type="chains" value="AC=34-249"/>
</dbReference>
<dbReference type="PDB" id="7ZUW">
    <property type="method" value="EM"/>
    <property type="resolution" value="4.30 A"/>
    <property type="chains" value="AC=34-249"/>
</dbReference>
<dbReference type="PDB" id="7ZUX">
    <property type="method" value="EM"/>
    <property type="resolution" value="2.50 A"/>
    <property type="chains" value="DC=34-249"/>
</dbReference>
<dbReference type="PDB" id="7ZW0">
    <property type="method" value="EM"/>
    <property type="resolution" value="2.40 A"/>
    <property type="chains" value="sR=1-254"/>
</dbReference>
<dbReference type="PDB" id="8BN3">
    <property type="method" value="EM"/>
    <property type="resolution" value="2.40 A"/>
    <property type="chains" value="S2=34-250"/>
</dbReference>
<dbReference type="PDB" id="8BQD">
    <property type="method" value="EM"/>
    <property type="resolution" value="3.90 A"/>
    <property type="chains" value="R=34-249"/>
</dbReference>
<dbReference type="PDB" id="8BQX">
    <property type="method" value="EM"/>
    <property type="resolution" value="3.80 A"/>
    <property type="chains" value="R=34-249"/>
</dbReference>
<dbReference type="PDB" id="8C01">
    <property type="method" value="EM"/>
    <property type="resolution" value="2.70 A"/>
    <property type="chains" value="R=1-254"/>
</dbReference>
<dbReference type="PDB" id="8C83">
    <property type="method" value="EM"/>
    <property type="resolution" value="3.00 A"/>
    <property type="chains" value="R=1-254"/>
</dbReference>
<dbReference type="PDB" id="8CAH">
    <property type="method" value="EM"/>
    <property type="resolution" value="3.00 A"/>
    <property type="chains" value="R=1-254"/>
</dbReference>
<dbReference type="PDB" id="8CAS">
    <property type="method" value="EM"/>
    <property type="resolution" value="3.30 A"/>
    <property type="chains" value="R=1-254"/>
</dbReference>
<dbReference type="PDB" id="8CBJ">
    <property type="method" value="EM"/>
    <property type="resolution" value="3.80 A"/>
    <property type="chains" value="C=1-254"/>
</dbReference>
<dbReference type="PDB" id="8CCS">
    <property type="method" value="EM"/>
    <property type="resolution" value="1.97 A"/>
    <property type="chains" value="f=1-254"/>
</dbReference>
<dbReference type="PDB" id="8CDL">
    <property type="method" value="EM"/>
    <property type="resolution" value="2.72 A"/>
    <property type="chains" value="f=1-254"/>
</dbReference>
<dbReference type="PDB" id="8CDR">
    <property type="method" value="EM"/>
    <property type="resolution" value="2.04 A"/>
    <property type="chains" value="f=1-254"/>
</dbReference>
<dbReference type="PDB" id="8CEH">
    <property type="method" value="EM"/>
    <property type="resolution" value="2.05 A"/>
    <property type="chains" value="f=1-254"/>
</dbReference>
<dbReference type="PDB" id="8CF5">
    <property type="method" value="EM"/>
    <property type="resolution" value="2.71 A"/>
    <property type="chains" value="f=1-254"/>
</dbReference>
<dbReference type="PDB" id="8CG8">
    <property type="method" value="EM"/>
    <property type="resolution" value="2.57 A"/>
    <property type="chains" value="f=1-254"/>
</dbReference>
<dbReference type="PDB" id="8CGN">
    <property type="method" value="EM"/>
    <property type="resolution" value="2.28 A"/>
    <property type="chains" value="f=1-254"/>
</dbReference>
<dbReference type="PDB" id="8CIV">
    <property type="method" value="EM"/>
    <property type="resolution" value="2.47 A"/>
    <property type="chains" value="f=1-254"/>
</dbReference>
<dbReference type="PDB" id="8CKU">
    <property type="method" value="EM"/>
    <property type="resolution" value="3.11 A"/>
    <property type="chains" value="f=1-254"/>
</dbReference>
<dbReference type="PDB" id="8CMJ">
    <property type="method" value="EM"/>
    <property type="resolution" value="3.79 A"/>
    <property type="chains" value="f=1-254"/>
</dbReference>
<dbReference type="PDB" id="8K2D">
    <property type="method" value="EM"/>
    <property type="resolution" value="3.20 A"/>
    <property type="chains" value="SC=1-254"/>
</dbReference>
<dbReference type="PDB" id="8K82">
    <property type="method" value="EM"/>
    <property type="resolution" value="3.00 A"/>
    <property type="chains" value="SC=1-254"/>
</dbReference>
<dbReference type="PDB" id="8P4V">
    <property type="method" value="X-ray"/>
    <property type="resolution" value="3.16 A"/>
    <property type="chains" value="D/s2=1-254"/>
</dbReference>
<dbReference type="PDB" id="8P9A">
    <property type="method" value="X-ray"/>
    <property type="resolution" value="2.90 A"/>
    <property type="chains" value="D/s2=1-254"/>
</dbReference>
<dbReference type="PDB" id="8T2X">
    <property type="method" value="EM"/>
    <property type="resolution" value="2.46 A"/>
    <property type="chains" value="BC=1-254"/>
</dbReference>
<dbReference type="PDB" id="8T2Y">
    <property type="method" value="EM"/>
    <property type="resolution" value="2.20 A"/>
    <property type="chains" value="BC=1-254"/>
</dbReference>
<dbReference type="PDB" id="8T2Z">
    <property type="method" value="EM"/>
    <property type="resolution" value="2.40 A"/>
    <property type="chains" value="BC=1-254"/>
</dbReference>
<dbReference type="PDB" id="8T30">
    <property type="method" value="EM"/>
    <property type="resolution" value="2.88 A"/>
    <property type="chains" value="BC=1-254"/>
</dbReference>
<dbReference type="PDB" id="8T3A">
    <property type="method" value="EM"/>
    <property type="resolution" value="2.86 A"/>
    <property type="chains" value="BC=1-254"/>
</dbReference>
<dbReference type="PDB" id="8T3B">
    <property type="method" value="EM"/>
    <property type="resolution" value="3.08 A"/>
    <property type="chains" value="BC=1-254"/>
</dbReference>
<dbReference type="PDB" id="8T3C">
    <property type="method" value="EM"/>
    <property type="resolution" value="3.86 A"/>
    <property type="chains" value="BC=1-254"/>
</dbReference>
<dbReference type="PDB" id="8T3D">
    <property type="method" value="EM"/>
    <property type="resolution" value="2.95 A"/>
    <property type="chains" value="BC=1-254"/>
</dbReference>
<dbReference type="PDB" id="8T3E">
    <property type="method" value="EM"/>
    <property type="resolution" value="3.04 A"/>
    <property type="chains" value="BC=1-254"/>
</dbReference>
<dbReference type="PDB" id="8T3F">
    <property type="method" value="EM"/>
    <property type="resolution" value="3.09 A"/>
    <property type="chains" value="BC=1-254"/>
</dbReference>
<dbReference type="PDB" id="8UT0">
    <property type="method" value="EM"/>
    <property type="resolution" value="3.22 A"/>
    <property type="chains" value="SR=34-249"/>
</dbReference>
<dbReference type="PDB" id="8UTI">
    <property type="method" value="EM"/>
    <property type="resolution" value="3.13 A"/>
    <property type="chains" value="SR=34-249"/>
</dbReference>
<dbReference type="PDB" id="8XU8">
    <property type="method" value="EM"/>
    <property type="resolution" value="3.40 A"/>
    <property type="chains" value="SR=34-249"/>
</dbReference>
<dbReference type="PDB" id="8Y0U">
    <property type="method" value="EM"/>
    <property type="resolution" value="3.59 A"/>
    <property type="chains" value="SC=1-254"/>
</dbReference>
<dbReference type="PDB" id="8YLD">
    <property type="method" value="EM"/>
    <property type="resolution" value="3.90 A"/>
    <property type="chains" value="SR=34-249"/>
</dbReference>
<dbReference type="PDB" id="8YLR">
    <property type="method" value="EM"/>
    <property type="resolution" value="3.90 A"/>
    <property type="chains" value="SR=34-249"/>
</dbReference>
<dbReference type="PDB" id="8Z70">
    <property type="method" value="EM"/>
    <property type="resolution" value="3.20 A"/>
    <property type="chains" value="SR=34-249"/>
</dbReference>
<dbReference type="PDB" id="8Z71">
    <property type="method" value="EM"/>
    <property type="resolution" value="3.60 A"/>
    <property type="chains" value="SR=34-249"/>
</dbReference>
<dbReference type="PDB" id="9F9S">
    <property type="method" value="EM"/>
    <property type="resolution" value="2.90 A"/>
    <property type="chains" value="Rc/Sc=1-254"/>
</dbReference>
<dbReference type="PDBsum" id="3J6X"/>
<dbReference type="PDBsum" id="3J6Y"/>
<dbReference type="PDBsum" id="3J77"/>
<dbReference type="PDBsum" id="3J78"/>
<dbReference type="PDBsum" id="4U3M"/>
<dbReference type="PDBsum" id="4U3N"/>
<dbReference type="PDBsum" id="4U3U"/>
<dbReference type="PDBsum" id="4U4N"/>
<dbReference type="PDBsum" id="4U4O"/>
<dbReference type="PDBsum" id="4U4Q"/>
<dbReference type="PDBsum" id="4U4R"/>
<dbReference type="PDBsum" id="4U4U"/>
<dbReference type="PDBsum" id="4U4Y"/>
<dbReference type="PDBsum" id="4U4Z"/>
<dbReference type="PDBsum" id="4U50"/>
<dbReference type="PDBsum" id="4U51"/>
<dbReference type="PDBsum" id="4U52"/>
<dbReference type="PDBsum" id="4U53"/>
<dbReference type="PDBsum" id="4U55"/>
<dbReference type="PDBsum" id="4U56"/>
<dbReference type="PDBsum" id="4U6F"/>
<dbReference type="PDBsum" id="4V4B"/>
<dbReference type="PDBsum" id="4V5Z"/>
<dbReference type="PDBsum" id="4V6I"/>
<dbReference type="PDBsum" id="4V7R"/>
<dbReference type="PDBsum" id="4V88"/>
<dbReference type="PDBsum" id="4V8Y"/>
<dbReference type="PDBsum" id="4V8Z"/>
<dbReference type="PDBsum" id="4V92"/>
<dbReference type="PDBsum" id="5DAT"/>
<dbReference type="PDBsum" id="5DC3"/>
<dbReference type="PDBsum" id="5DGE"/>
<dbReference type="PDBsum" id="5DGF"/>
<dbReference type="PDBsum" id="5DGV"/>
<dbReference type="PDBsum" id="5FCI"/>
<dbReference type="PDBsum" id="5FCJ"/>
<dbReference type="PDBsum" id="5I4L"/>
<dbReference type="PDBsum" id="5JUO"/>
<dbReference type="PDBsum" id="5JUP"/>
<dbReference type="PDBsum" id="5JUS"/>
<dbReference type="PDBsum" id="5JUT"/>
<dbReference type="PDBsum" id="5JUU"/>
<dbReference type="PDBsum" id="5LL6"/>
<dbReference type="PDBsum" id="5LYB"/>
<dbReference type="PDBsum" id="5M1J"/>
<dbReference type="PDBsum" id="5MC6"/>
<dbReference type="PDBsum" id="5MEI"/>
<dbReference type="PDBsum" id="5NDG"/>
<dbReference type="PDBsum" id="5NDV"/>
<dbReference type="PDBsum" id="5NDW"/>
<dbReference type="PDBsum" id="5OBM"/>
<dbReference type="PDBsum" id="5ON6"/>
<dbReference type="PDBsum" id="5TBW"/>
<dbReference type="PDBsum" id="5TGA"/>
<dbReference type="PDBsum" id="5TGM"/>
<dbReference type="PDBsum" id="6EML"/>
<dbReference type="PDBsum" id="6FAI"/>
<dbReference type="PDBsum" id="6GQ1"/>
<dbReference type="PDBsum" id="6GQB"/>
<dbReference type="PDBsum" id="6GQV"/>
<dbReference type="PDBsum" id="6HHQ"/>
<dbReference type="PDBsum" id="6I7O"/>
<dbReference type="PDBsum" id="6Q8Y"/>
<dbReference type="PDBsum" id="6RBD"/>
<dbReference type="PDBsum" id="6RBE"/>
<dbReference type="PDBsum" id="6S47"/>
<dbReference type="PDBsum" id="6SNT"/>
<dbReference type="PDBsum" id="6SV4"/>
<dbReference type="PDBsum" id="6T4Q"/>
<dbReference type="PDBsum" id="6T7I"/>
<dbReference type="PDBsum" id="6T7T"/>
<dbReference type="PDBsum" id="6T83"/>
<dbReference type="PDBsum" id="6TB3"/>
<dbReference type="PDBsum" id="6TNU"/>
<dbReference type="PDBsum" id="6WDR"/>
<dbReference type="PDBsum" id="6WOO"/>
<dbReference type="PDBsum" id="6Y7C"/>
<dbReference type="PDBsum" id="6Z6J"/>
<dbReference type="PDBsum" id="6Z6K"/>
<dbReference type="PDBsum" id="6ZCE"/>
<dbReference type="PDBsum" id="6ZU9"/>
<dbReference type="PDBsum" id="6ZVI"/>
<dbReference type="PDBsum" id="7A1G"/>
<dbReference type="PDBsum" id="7B7D"/>
<dbReference type="PDBsum" id="7MPI"/>
<dbReference type="PDBsum" id="7MPJ"/>
<dbReference type="PDBsum" id="7N8B"/>
<dbReference type="PDBsum" id="7NRC"/>
<dbReference type="PDBsum" id="7NRD"/>
<dbReference type="PDBsum" id="7WTN"/>
<dbReference type="PDBsum" id="7WTP"/>
<dbReference type="PDBsum" id="7WTR"/>
<dbReference type="PDBsum" id="7ZPQ"/>
<dbReference type="PDBsum" id="7ZRS"/>
<dbReference type="PDBsum" id="7ZUW"/>
<dbReference type="PDBsum" id="7ZUX"/>
<dbReference type="PDBsum" id="7ZW0"/>
<dbReference type="PDBsum" id="8BN3"/>
<dbReference type="PDBsum" id="8BQD"/>
<dbReference type="PDBsum" id="8BQX"/>
<dbReference type="PDBsum" id="8C01"/>
<dbReference type="PDBsum" id="8C83"/>
<dbReference type="PDBsum" id="8CAH"/>
<dbReference type="PDBsum" id="8CAS"/>
<dbReference type="PDBsum" id="8CBJ"/>
<dbReference type="PDBsum" id="8CCS"/>
<dbReference type="PDBsum" id="8CDL"/>
<dbReference type="PDBsum" id="8CDR"/>
<dbReference type="PDBsum" id="8CEH"/>
<dbReference type="PDBsum" id="8CF5"/>
<dbReference type="PDBsum" id="8CG8"/>
<dbReference type="PDBsum" id="8CGN"/>
<dbReference type="PDBsum" id="8CIV"/>
<dbReference type="PDBsum" id="8CKU"/>
<dbReference type="PDBsum" id="8CMJ"/>
<dbReference type="PDBsum" id="8K2D"/>
<dbReference type="PDBsum" id="8K82"/>
<dbReference type="PDBsum" id="8P4V"/>
<dbReference type="PDBsum" id="8P9A"/>
<dbReference type="PDBsum" id="8T2X"/>
<dbReference type="PDBsum" id="8T2Y"/>
<dbReference type="PDBsum" id="8T2Z"/>
<dbReference type="PDBsum" id="8T30"/>
<dbReference type="PDBsum" id="8T3A"/>
<dbReference type="PDBsum" id="8T3B"/>
<dbReference type="PDBsum" id="8T3C"/>
<dbReference type="PDBsum" id="8T3D"/>
<dbReference type="PDBsum" id="8T3E"/>
<dbReference type="PDBsum" id="8T3F"/>
<dbReference type="PDBsum" id="8UT0"/>
<dbReference type="PDBsum" id="8UTI"/>
<dbReference type="PDBsum" id="8XU8"/>
<dbReference type="PDBsum" id="8Y0U"/>
<dbReference type="PDBsum" id="8YLD"/>
<dbReference type="PDBsum" id="8YLR"/>
<dbReference type="PDBsum" id="8Z70"/>
<dbReference type="PDBsum" id="8Z71"/>
<dbReference type="PDBsum" id="9F9S"/>
<dbReference type="EMDB" id="EMD-0047"/>
<dbReference type="EMDB" id="EMD-0048"/>
<dbReference type="EMDB" id="EMD-0049"/>
<dbReference type="EMDB" id="EMD-10098"/>
<dbReference type="EMDB" id="EMD-10262"/>
<dbReference type="EMDB" id="EMD-10315"/>
<dbReference type="EMDB" id="EMD-10377"/>
<dbReference type="EMDB" id="EMD-10396"/>
<dbReference type="EMDB" id="EMD-10397"/>
<dbReference type="EMDB" id="EMD-10398"/>
<dbReference type="EMDB" id="EMD-10431"/>
<dbReference type="EMDB" id="EMD-10537"/>
<dbReference type="EMDB" id="EMD-10713"/>
<dbReference type="EMDB" id="EMD-11096"/>
<dbReference type="EMDB" id="EMD-11097"/>
<dbReference type="EMDB" id="EMD-11160"/>
<dbReference type="EMDB" id="EMD-11439"/>
<dbReference type="EMDB" id="EMD-11608"/>
<dbReference type="EMDB" id="EMD-12081"/>
<dbReference type="EMDB" id="EMD-12534"/>
<dbReference type="EMDB" id="EMD-12535"/>
<dbReference type="EMDB" id="EMD-14979"/>
<dbReference type="EMDB" id="EMD-14990"/>
<dbReference type="EMDB" id="EMD-16191"/>
<dbReference type="EMDB" id="EMD-16349"/>
<dbReference type="EMDB" id="EMD-16470"/>
<dbReference type="EMDB" id="EMD-16525"/>
<dbReference type="EMDB" id="EMD-16533"/>
<dbReference type="EMDB" id="EMD-16541"/>
<dbReference type="EMDB" id="EMD-16563"/>
<dbReference type="EMDB" id="EMD-16591"/>
<dbReference type="EMDB" id="EMD-16594"/>
<dbReference type="EMDB" id="EMD-16609"/>
<dbReference type="EMDB" id="EMD-16616"/>
<dbReference type="EMDB" id="EMD-16634"/>
<dbReference type="EMDB" id="EMD-16648"/>
<dbReference type="EMDB" id="EMD-16684"/>
<dbReference type="EMDB" id="EMD-16702"/>
<dbReference type="EMDB" id="EMD-16729"/>
<dbReference type="EMDB" id="EMD-21644"/>
<dbReference type="EMDB" id="EMD-21859"/>
<dbReference type="EMDB" id="EMD-23934"/>
<dbReference type="EMDB" id="EMD-23935"/>
<dbReference type="EMDB" id="EMD-24235"/>
<dbReference type="EMDB" id="EMD-32792"/>
<dbReference type="EMDB" id="EMD-32794"/>
<dbReference type="EMDB" id="EMD-32796"/>
<dbReference type="EMDB" id="EMD-3461"/>
<dbReference type="EMDB" id="EMD-36839"/>
<dbReference type="EMDB" id="EMD-36945"/>
<dbReference type="EMDB" id="EMD-38660"/>
<dbReference type="EMDB" id="EMD-4140"/>
<dbReference type="EMDB" id="EMD-4214"/>
<dbReference type="EMDB" id="EMD-4427"/>
<dbReference type="EMDB" id="EMD-4474"/>
<dbReference type="EMDB" id="EMD-4792"/>
<dbReference type="EMDB" id="EMD-4793"/>
<dbReference type="EMDB" id="EMD-50259"/>
<dbReference type="SMR" id="P25443"/>
<dbReference type="BioGRID" id="33128">
    <property type="interactions" value="936"/>
</dbReference>
<dbReference type="ComplexPortal" id="CPX-1599">
    <property type="entry name" value="40S cytosolic small ribosomal subunit"/>
</dbReference>
<dbReference type="FunCoup" id="P25443">
    <property type="interactions" value="1135"/>
</dbReference>
<dbReference type="IntAct" id="P25443">
    <property type="interactions" value="79"/>
</dbReference>
<dbReference type="MINT" id="P25443"/>
<dbReference type="STRING" id="4932.YGL123W"/>
<dbReference type="CarbonylDB" id="P25443"/>
<dbReference type="iPTMnet" id="P25443"/>
<dbReference type="PaxDb" id="4932-YGL123W"/>
<dbReference type="PeptideAtlas" id="P25443"/>
<dbReference type="EnsemblFungi" id="YGL123W_mRNA">
    <property type="protein sequence ID" value="YGL123W"/>
    <property type="gene ID" value="YGL123W"/>
</dbReference>
<dbReference type="GeneID" id="852754"/>
<dbReference type="KEGG" id="sce:YGL123W"/>
<dbReference type="AGR" id="SGD:S000003091"/>
<dbReference type="SGD" id="S000003091">
    <property type="gene designation" value="RPS2"/>
</dbReference>
<dbReference type="VEuPathDB" id="FungiDB:YGL123W"/>
<dbReference type="eggNOG" id="KOG0877">
    <property type="taxonomic scope" value="Eukaryota"/>
</dbReference>
<dbReference type="GeneTree" id="ENSGT00940000153095"/>
<dbReference type="HOGENOM" id="CLU_065898_0_2_1"/>
<dbReference type="InParanoid" id="P25443"/>
<dbReference type="OMA" id="PYEEWSD"/>
<dbReference type="OrthoDB" id="10253125at2759"/>
<dbReference type="BioCyc" id="YEAST:G3O-30620-MONOMER"/>
<dbReference type="Reactome" id="R-SCE-156827">
    <property type="pathway name" value="L13a-mediated translational silencing of Ceruloplasmin expression"/>
</dbReference>
<dbReference type="Reactome" id="R-SCE-1799339">
    <property type="pathway name" value="SRP-dependent cotranslational protein targeting to membrane"/>
</dbReference>
<dbReference type="Reactome" id="R-SCE-3214858">
    <property type="pathway name" value="RMTs methylate histone arginines"/>
</dbReference>
<dbReference type="Reactome" id="R-SCE-6791226">
    <property type="pathway name" value="Major pathway of rRNA processing in the nucleolus and cytosol"/>
</dbReference>
<dbReference type="Reactome" id="R-SCE-72649">
    <property type="pathway name" value="Translation initiation complex formation"/>
</dbReference>
<dbReference type="Reactome" id="R-SCE-72689">
    <property type="pathway name" value="Formation of a pool of free 40S subunits"/>
</dbReference>
<dbReference type="Reactome" id="R-SCE-72695">
    <property type="pathway name" value="Formation of the ternary complex, and subsequently, the 43S complex"/>
</dbReference>
<dbReference type="Reactome" id="R-SCE-72702">
    <property type="pathway name" value="Ribosomal scanning and start codon recognition"/>
</dbReference>
<dbReference type="Reactome" id="R-SCE-72706">
    <property type="pathway name" value="GTP hydrolysis and joining of the 60S ribosomal subunit"/>
</dbReference>
<dbReference type="Reactome" id="R-SCE-8876725">
    <property type="pathway name" value="Protein methylation"/>
</dbReference>
<dbReference type="Reactome" id="R-SCE-975956">
    <property type="pathway name" value="Nonsense Mediated Decay (NMD) independent of the Exon Junction Complex (EJC)"/>
</dbReference>
<dbReference type="Reactome" id="R-SCE-975957">
    <property type="pathway name" value="Nonsense Mediated Decay (NMD) enhanced by the Exon Junction Complex (EJC)"/>
</dbReference>
<dbReference type="BioGRID-ORCS" id="852754">
    <property type="hits" value="5 hits in 10 CRISPR screens"/>
</dbReference>
<dbReference type="CD-CODE" id="E03F929F">
    <property type="entry name" value="Stress granule"/>
</dbReference>
<dbReference type="PRO" id="PR:P25443"/>
<dbReference type="Proteomes" id="UP000002311">
    <property type="component" value="Chromosome VII"/>
</dbReference>
<dbReference type="RNAct" id="P25443">
    <property type="molecule type" value="protein"/>
</dbReference>
<dbReference type="GO" id="GO:0005737">
    <property type="term" value="C:cytoplasm"/>
    <property type="evidence" value="ECO:0000314"/>
    <property type="project" value="ComplexPortal"/>
</dbReference>
<dbReference type="GO" id="GO:0005829">
    <property type="term" value="C:cytosol"/>
    <property type="evidence" value="ECO:0000304"/>
    <property type="project" value="Reactome"/>
</dbReference>
<dbReference type="GO" id="GO:0022627">
    <property type="term" value="C:cytosolic small ribosomal subunit"/>
    <property type="evidence" value="ECO:0000314"/>
    <property type="project" value="SGD"/>
</dbReference>
<dbReference type="GO" id="GO:0005730">
    <property type="term" value="C:nucleolus"/>
    <property type="evidence" value="ECO:0007669"/>
    <property type="project" value="UniProtKB-SubCell"/>
</dbReference>
<dbReference type="GO" id="GO:0005654">
    <property type="term" value="C:nucleoplasm"/>
    <property type="evidence" value="ECO:0000304"/>
    <property type="project" value="Reactome"/>
</dbReference>
<dbReference type="GO" id="GO:0032040">
    <property type="term" value="C:small-subunit processome"/>
    <property type="evidence" value="ECO:0000314"/>
    <property type="project" value="SGD"/>
</dbReference>
<dbReference type="GO" id="GO:0070181">
    <property type="term" value="F:small ribosomal subunit rRNA binding"/>
    <property type="evidence" value="ECO:0000314"/>
    <property type="project" value="SGD"/>
</dbReference>
<dbReference type="GO" id="GO:0003735">
    <property type="term" value="F:structural constituent of ribosome"/>
    <property type="evidence" value="ECO:0000314"/>
    <property type="project" value="SGD"/>
</dbReference>
<dbReference type="GO" id="GO:0002181">
    <property type="term" value="P:cytoplasmic translation"/>
    <property type="evidence" value="ECO:0000303"/>
    <property type="project" value="ComplexPortal"/>
</dbReference>
<dbReference type="GO" id="GO:0045903">
    <property type="term" value="P:positive regulation of translational fidelity"/>
    <property type="evidence" value="ECO:0000315"/>
    <property type="project" value="SGD"/>
</dbReference>
<dbReference type="GO" id="GO:0000054">
    <property type="term" value="P:ribosomal subunit export from nucleus"/>
    <property type="evidence" value="ECO:0000315"/>
    <property type="project" value="SGD"/>
</dbReference>
<dbReference type="GO" id="GO:0006364">
    <property type="term" value="P:rRNA processing"/>
    <property type="evidence" value="ECO:0007669"/>
    <property type="project" value="UniProtKB-KW"/>
</dbReference>
<dbReference type="GO" id="GO:0006412">
    <property type="term" value="P:translation"/>
    <property type="evidence" value="ECO:0000318"/>
    <property type="project" value="GO_Central"/>
</dbReference>
<dbReference type="FunFam" id="3.30.160.20:FF:000002">
    <property type="entry name" value="40S ribosomal protein S2"/>
    <property type="match status" value="1"/>
</dbReference>
<dbReference type="FunFam" id="3.30.230.10:FF:000004">
    <property type="entry name" value="40S ribosomal protein S2"/>
    <property type="match status" value="1"/>
</dbReference>
<dbReference type="Gene3D" id="3.30.160.20">
    <property type="match status" value="1"/>
</dbReference>
<dbReference type="Gene3D" id="3.30.230.10">
    <property type="match status" value="1"/>
</dbReference>
<dbReference type="InterPro" id="IPR020568">
    <property type="entry name" value="Ribosomal_Su5_D2-typ_SF"/>
</dbReference>
<dbReference type="InterPro" id="IPR000851">
    <property type="entry name" value="Ribosomal_uS5"/>
</dbReference>
<dbReference type="InterPro" id="IPR005324">
    <property type="entry name" value="Ribosomal_uS5_C"/>
</dbReference>
<dbReference type="InterPro" id="IPR005711">
    <property type="entry name" value="Ribosomal_uS5_euk/arc"/>
</dbReference>
<dbReference type="InterPro" id="IPR013810">
    <property type="entry name" value="Ribosomal_uS5_N"/>
</dbReference>
<dbReference type="InterPro" id="IPR018192">
    <property type="entry name" value="Ribosomal_uS5_N_CS"/>
</dbReference>
<dbReference type="InterPro" id="IPR014721">
    <property type="entry name" value="Ribsml_uS5_D2-typ_fold_subgr"/>
</dbReference>
<dbReference type="NCBIfam" id="TIGR01020">
    <property type="entry name" value="uS5_euk_arch"/>
    <property type="match status" value="1"/>
</dbReference>
<dbReference type="PANTHER" id="PTHR13718:SF4">
    <property type="entry name" value="40S RIBOSOMAL PROTEIN S2"/>
    <property type="match status" value="1"/>
</dbReference>
<dbReference type="PANTHER" id="PTHR13718">
    <property type="entry name" value="RIBOSOMAL S SUBUNIT"/>
    <property type="match status" value="1"/>
</dbReference>
<dbReference type="Pfam" id="PF00333">
    <property type="entry name" value="Ribosomal_S5"/>
    <property type="match status" value="1"/>
</dbReference>
<dbReference type="Pfam" id="PF03719">
    <property type="entry name" value="Ribosomal_S5_C"/>
    <property type="match status" value="1"/>
</dbReference>
<dbReference type="SUPFAM" id="SSF54768">
    <property type="entry name" value="dsRNA-binding domain-like"/>
    <property type="match status" value="1"/>
</dbReference>
<dbReference type="SUPFAM" id="SSF54211">
    <property type="entry name" value="Ribosomal protein S5 domain 2-like"/>
    <property type="match status" value="1"/>
</dbReference>
<dbReference type="PROSITE" id="PS00585">
    <property type="entry name" value="RIBOSOMAL_S5"/>
    <property type="match status" value="1"/>
</dbReference>
<dbReference type="PROSITE" id="PS50881">
    <property type="entry name" value="S5_DSRBD"/>
    <property type="match status" value="1"/>
</dbReference>
<sequence>MSAPEAQQQKRGGFGGRNRGRPNRRGPRNTEEKGWVPVTKLGRLVKAGKITTIEEIFLHSLPVKEFQIIDTLLPGLQDEVMNIKPVQKQTRAGQRTRFKAVVVVGDSNGHVGLGIKTAKEVAGAIRAGIIIAKLSVIPIRRGYWGTNLGQPHSLATKTTGKCGSVTVRLIPAPRGSGIVASPAVKKLLQLAGVEDVYTQSNGKTRTLENTLKAAFVAIGNTYGFLTPNLWAEQPLPVSPLDIYSDEASAQKKRF</sequence>